<proteinExistence type="evidence at protein level"/>
<feature type="chain" id="PRO_0000326445" description="Unknown protein 3">
    <location>
        <begin position="1" status="less than"/>
        <end position="10" status="greater than"/>
    </location>
</feature>
<feature type="unsure residue" description="L or I">
    <location>
        <position position="6"/>
    </location>
</feature>
<feature type="unsure residue" description="L or I">
    <location>
        <position position="9"/>
    </location>
</feature>
<feature type="non-terminal residue" evidence="2">
    <location>
        <position position="1"/>
    </location>
</feature>
<feature type="non-terminal residue" evidence="2">
    <location>
        <position position="10"/>
    </location>
</feature>
<comment type="subcellular location">
    <subcellularLocation>
        <location evidence="1">Secreted</location>
        <location evidence="1">Cell wall</location>
    </subcellularLocation>
</comment>
<accession>P85487</accession>
<evidence type="ECO:0000269" key="1">
    <source>
    </source>
</evidence>
<evidence type="ECO:0000303" key="2">
    <source>
    </source>
</evidence>
<evidence type="ECO:0000305" key="3"/>
<keyword id="KW-0134">Cell wall</keyword>
<keyword id="KW-0903">Direct protein sequencing</keyword>
<keyword id="KW-0964">Secreted</keyword>
<sequence length="10" mass="1158">WVDADLNGLR</sequence>
<reference evidence="3" key="1">
    <citation type="journal article" date="2009" name="J. Plant Physiol.">
        <title>Analysis of the soluble cell wall proteome of gymnosperms.</title>
        <authorList>
            <person name="Uzal E.N."/>
            <person name="Gomez-Ros L.V."/>
            <person name="Hernandez J.A."/>
            <person name="Pedreno M.A."/>
            <person name="Cuello J."/>
            <person name="Ros Barcelo A."/>
        </authorList>
    </citation>
    <scope>PROTEIN SEQUENCE</scope>
    <scope>SUBCELLULAR LOCATION</scope>
    <source>
        <strain evidence="1">PC-801</strain>
        <tissue evidence="1">Callus</tissue>
    </source>
</reference>
<dbReference type="GO" id="GO:0005576">
    <property type="term" value="C:extracellular region"/>
    <property type="evidence" value="ECO:0007669"/>
    <property type="project" value="UniProtKB-KW"/>
</dbReference>
<organism>
    <name type="scientific">Pinus halepensis</name>
    <name type="common">Aleppo pine</name>
    <dbReference type="NCBI Taxonomy" id="71633"/>
    <lineage>
        <taxon>Eukaryota</taxon>
        <taxon>Viridiplantae</taxon>
        <taxon>Streptophyta</taxon>
        <taxon>Embryophyta</taxon>
        <taxon>Tracheophyta</taxon>
        <taxon>Spermatophyta</taxon>
        <taxon>Pinopsida</taxon>
        <taxon>Pinidae</taxon>
        <taxon>Conifers I</taxon>
        <taxon>Pinales</taxon>
        <taxon>Pinaceae</taxon>
        <taxon>Pinus</taxon>
        <taxon>Pinus subgen. Pinus</taxon>
    </lineage>
</organism>
<name>UP03_PINHA</name>
<protein>
    <recommendedName>
        <fullName>Unknown protein 3</fullName>
    </recommendedName>
</protein>